<organism>
    <name type="scientific">Vibrio campbellii (strain ATCC BAA-1116)</name>
    <dbReference type="NCBI Taxonomy" id="2902295"/>
    <lineage>
        <taxon>Bacteria</taxon>
        <taxon>Pseudomonadati</taxon>
        <taxon>Pseudomonadota</taxon>
        <taxon>Gammaproteobacteria</taxon>
        <taxon>Vibrionales</taxon>
        <taxon>Vibrionaceae</taxon>
        <taxon>Vibrio</taxon>
    </lineage>
</organism>
<dbReference type="EC" id="6.3.4.5" evidence="1"/>
<dbReference type="EMBL" id="CP000789">
    <property type="protein sequence ID" value="ABU69101.1"/>
    <property type="molecule type" value="Genomic_DNA"/>
</dbReference>
<dbReference type="RefSeq" id="WP_005432709.1">
    <property type="nucleotide sequence ID" value="NC_022269.1"/>
</dbReference>
<dbReference type="SMR" id="A7MXB9"/>
<dbReference type="KEGG" id="vha:VIBHAR_00041"/>
<dbReference type="PATRIC" id="fig|338187.25.peg.2482"/>
<dbReference type="UniPathway" id="UPA00068">
    <property type="reaction ID" value="UER00113"/>
</dbReference>
<dbReference type="Proteomes" id="UP000008152">
    <property type="component" value="Chromosome I"/>
</dbReference>
<dbReference type="GO" id="GO:0005737">
    <property type="term" value="C:cytoplasm"/>
    <property type="evidence" value="ECO:0007669"/>
    <property type="project" value="UniProtKB-SubCell"/>
</dbReference>
<dbReference type="GO" id="GO:0004055">
    <property type="term" value="F:argininosuccinate synthase activity"/>
    <property type="evidence" value="ECO:0007669"/>
    <property type="project" value="UniProtKB-UniRule"/>
</dbReference>
<dbReference type="GO" id="GO:0005524">
    <property type="term" value="F:ATP binding"/>
    <property type="evidence" value="ECO:0007669"/>
    <property type="project" value="UniProtKB-UniRule"/>
</dbReference>
<dbReference type="GO" id="GO:0000053">
    <property type="term" value="P:argininosuccinate metabolic process"/>
    <property type="evidence" value="ECO:0007669"/>
    <property type="project" value="TreeGrafter"/>
</dbReference>
<dbReference type="GO" id="GO:0006526">
    <property type="term" value="P:L-arginine biosynthetic process"/>
    <property type="evidence" value="ECO:0007669"/>
    <property type="project" value="UniProtKB-UniRule"/>
</dbReference>
<dbReference type="GO" id="GO:0000050">
    <property type="term" value="P:urea cycle"/>
    <property type="evidence" value="ECO:0007669"/>
    <property type="project" value="TreeGrafter"/>
</dbReference>
<dbReference type="CDD" id="cd01999">
    <property type="entry name" value="ASS"/>
    <property type="match status" value="1"/>
</dbReference>
<dbReference type="FunFam" id="1.20.5.470:FF:000005">
    <property type="entry name" value="Argininosuccinate synthase"/>
    <property type="match status" value="1"/>
</dbReference>
<dbReference type="FunFam" id="3.40.50.620:FF:000019">
    <property type="entry name" value="Argininosuccinate synthase"/>
    <property type="match status" value="1"/>
</dbReference>
<dbReference type="FunFam" id="3.90.1260.10:FF:000007">
    <property type="entry name" value="Argininosuccinate synthase"/>
    <property type="match status" value="1"/>
</dbReference>
<dbReference type="Gene3D" id="3.90.1260.10">
    <property type="entry name" value="Argininosuccinate synthetase, chain A, domain 2"/>
    <property type="match status" value="1"/>
</dbReference>
<dbReference type="Gene3D" id="3.40.50.620">
    <property type="entry name" value="HUPs"/>
    <property type="match status" value="1"/>
</dbReference>
<dbReference type="Gene3D" id="1.20.5.470">
    <property type="entry name" value="Single helix bin"/>
    <property type="match status" value="1"/>
</dbReference>
<dbReference type="HAMAP" id="MF_00005">
    <property type="entry name" value="Arg_succ_synth_type1"/>
    <property type="match status" value="1"/>
</dbReference>
<dbReference type="InterPro" id="IPR048268">
    <property type="entry name" value="Arginosuc_syn_C"/>
</dbReference>
<dbReference type="InterPro" id="IPR048267">
    <property type="entry name" value="Arginosuc_syn_N"/>
</dbReference>
<dbReference type="InterPro" id="IPR001518">
    <property type="entry name" value="Arginosuc_synth"/>
</dbReference>
<dbReference type="InterPro" id="IPR018223">
    <property type="entry name" value="Arginosuc_synth_CS"/>
</dbReference>
<dbReference type="InterPro" id="IPR023434">
    <property type="entry name" value="Arginosuc_synth_type_1_subfam"/>
</dbReference>
<dbReference type="InterPro" id="IPR024074">
    <property type="entry name" value="AS_cat/multimer_dom_body"/>
</dbReference>
<dbReference type="InterPro" id="IPR014729">
    <property type="entry name" value="Rossmann-like_a/b/a_fold"/>
</dbReference>
<dbReference type="NCBIfam" id="TIGR00032">
    <property type="entry name" value="argG"/>
    <property type="match status" value="1"/>
</dbReference>
<dbReference type="NCBIfam" id="NF001770">
    <property type="entry name" value="PRK00509.1"/>
    <property type="match status" value="1"/>
</dbReference>
<dbReference type="PANTHER" id="PTHR11587">
    <property type="entry name" value="ARGININOSUCCINATE SYNTHASE"/>
    <property type="match status" value="1"/>
</dbReference>
<dbReference type="PANTHER" id="PTHR11587:SF2">
    <property type="entry name" value="ARGININOSUCCINATE SYNTHASE"/>
    <property type="match status" value="1"/>
</dbReference>
<dbReference type="Pfam" id="PF20979">
    <property type="entry name" value="Arginosuc_syn_C"/>
    <property type="match status" value="1"/>
</dbReference>
<dbReference type="Pfam" id="PF00764">
    <property type="entry name" value="Arginosuc_synth"/>
    <property type="match status" value="1"/>
</dbReference>
<dbReference type="SUPFAM" id="SSF52402">
    <property type="entry name" value="Adenine nucleotide alpha hydrolases-like"/>
    <property type="match status" value="1"/>
</dbReference>
<dbReference type="SUPFAM" id="SSF69864">
    <property type="entry name" value="Argininosuccinate synthetase, C-terminal domain"/>
    <property type="match status" value="1"/>
</dbReference>
<dbReference type="PROSITE" id="PS00564">
    <property type="entry name" value="ARGININOSUCCIN_SYN_1"/>
    <property type="match status" value="1"/>
</dbReference>
<dbReference type="PROSITE" id="PS00565">
    <property type="entry name" value="ARGININOSUCCIN_SYN_2"/>
    <property type="match status" value="1"/>
</dbReference>
<name>ASSY_VIBC1</name>
<reference key="1">
    <citation type="submission" date="2007-08" db="EMBL/GenBank/DDBJ databases">
        <authorList>
            <consortium name="The Vibrio harveyi Genome Sequencing Project"/>
            <person name="Bassler B."/>
            <person name="Clifton S.W."/>
            <person name="Fulton L."/>
            <person name="Delehaunty K."/>
            <person name="Fronick C."/>
            <person name="Harrison M."/>
            <person name="Markivic C."/>
            <person name="Fulton R."/>
            <person name="Tin-Wollam A.-M."/>
            <person name="Shah N."/>
            <person name="Pepin K."/>
            <person name="Nash W."/>
            <person name="Thiruvilangam P."/>
            <person name="Bhonagiri V."/>
            <person name="Waters C."/>
            <person name="Tu K.C."/>
            <person name="Irgon J."/>
            <person name="Wilson R.K."/>
        </authorList>
    </citation>
    <scope>NUCLEOTIDE SEQUENCE [LARGE SCALE GENOMIC DNA]</scope>
    <source>
        <strain>ATCC BAA-1116 / BB120</strain>
    </source>
</reference>
<sequence length="404" mass="44483">MSKVNVNKVVVAYSGGLDTSVIIPWLKENYDCEVVAFVADVGQGAEELEGIEAKAKASGASECYIADLKEEMVADYIFPTLKTGAYYEGKYLLGTSMARPIIAKAQVEVARKVGADALCHGCTGKGNDQVRFEGAFAALAPDLHVIAPWREWDLVSREECLDYLAERNIPCSASLTKIYSRDANAWHISTEGGVLEDTWNAPNEDCWAWTVDPEQAPNEAETVTLKVAKGEIVEVDGEAMTPYNALVYLNEKGAKHGVGRIDIVENRLVGMKSRGCYETPGGTIMMEALRAVEQLVLDKASFEFREELGLKASHLVYDGRWFTPLCKSILAASEELAQDVNGEVVVKLYKGQATVTQKRSDNSLYSEEFATFGEDEVYDQSHAEGFIRLYSLSSRIRALNSQKK</sequence>
<protein>
    <recommendedName>
        <fullName evidence="1">Argininosuccinate synthase</fullName>
        <ecNumber evidence="1">6.3.4.5</ecNumber>
    </recommendedName>
    <alternativeName>
        <fullName evidence="1">Citrulline--aspartate ligase</fullName>
    </alternativeName>
</protein>
<accession>A7MXB9</accession>
<feature type="chain" id="PRO_1000000446" description="Argininosuccinate synthase">
    <location>
        <begin position="1"/>
        <end position="404"/>
    </location>
</feature>
<feature type="binding site" evidence="1">
    <location>
        <begin position="12"/>
        <end position="20"/>
    </location>
    <ligand>
        <name>ATP</name>
        <dbReference type="ChEBI" id="CHEBI:30616"/>
    </ligand>
</feature>
<feature type="binding site" evidence="1">
    <location>
        <position position="39"/>
    </location>
    <ligand>
        <name>ATP</name>
        <dbReference type="ChEBI" id="CHEBI:30616"/>
    </ligand>
</feature>
<feature type="binding site" evidence="1">
    <location>
        <position position="91"/>
    </location>
    <ligand>
        <name>L-citrulline</name>
        <dbReference type="ChEBI" id="CHEBI:57743"/>
    </ligand>
</feature>
<feature type="binding site" evidence="1">
    <location>
        <position position="96"/>
    </location>
    <ligand>
        <name>L-citrulline</name>
        <dbReference type="ChEBI" id="CHEBI:57743"/>
    </ligand>
</feature>
<feature type="binding site" evidence="1">
    <location>
        <position position="121"/>
    </location>
    <ligand>
        <name>ATP</name>
        <dbReference type="ChEBI" id="CHEBI:30616"/>
    </ligand>
</feature>
<feature type="binding site" evidence="1">
    <location>
        <position position="123"/>
    </location>
    <ligand>
        <name>L-aspartate</name>
        <dbReference type="ChEBI" id="CHEBI:29991"/>
    </ligand>
</feature>
<feature type="binding site" evidence="1">
    <location>
        <position position="127"/>
    </location>
    <ligand>
        <name>L-aspartate</name>
        <dbReference type="ChEBI" id="CHEBI:29991"/>
    </ligand>
</feature>
<feature type="binding site" evidence="1">
    <location>
        <position position="127"/>
    </location>
    <ligand>
        <name>L-citrulline</name>
        <dbReference type="ChEBI" id="CHEBI:57743"/>
    </ligand>
</feature>
<feature type="binding site" evidence="1">
    <location>
        <position position="128"/>
    </location>
    <ligand>
        <name>L-aspartate</name>
        <dbReference type="ChEBI" id="CHEBI:29991"/>
    </ligand>
</feature>
<feature type="binding site" evidence="1">
    <location>
        <position position="131"/>
    </location>
    <ligand>
        <name>L-citrulline</name>
        <dbReference type="ChEBI" id="CHEBI:57743"/>
    </ligand>
</feature>
<feature type="binding site" evidence="1">
    <location>
        <position position="180"/>
    </location>
    <ligand>
        <name>L-citrulline</name>
        <dbReference type="ChEBI" id="CHEBI:57743"/>
    </ligand>
</feature>
<feature type="binding site" evidence="1">
    <location>
        <position position="189"/>
    </location>
    <ligand>
        <name>L-citrulline</name>
        <dbReference type="ChEBI" id="CHEBI:57743"/>
    </ligand>
</feature>
<feature type="binding site" evidence="1">
    <location>
        <position position="265"/>
    </location>
    <ligand>
        <name>L-citrulline</name>
        <dbReference type="ChEBI" id="CHEBI:57743"/>
    </ligand>
</feature>
<feature type="binding site" evidence="1">
    <location>
        <position position="277"/>
    </location>
    <ligand>
        <name>L-citrulline</name>
        <dbReference type="ChEBI" id="CHEBI:57743"/>
    </ligand>
</feature>
<proteinExistence type="inferred from homology"/>
<gene>
    <name evidence="1" type="primary">argG</name>
    <name type="ordered locus">VIBHAR_00041</name>
</gene>
<evidence type="ECO:0000255" key="1">
    <source>
        <dbReference type="HAMAP-Rule" id="MF_00005"/>
    </source>
</evidence>
<keyword id="KW-0028">Amino-acid biosynthesis</keyword>
<keyword id="KW-0055">Arginine biosynthesis</keyword>
<keyword id="KW-0067">ATP-binding</keyword>
<keyword id="KW-0963">Cytoplasm</keyword>
<keyword id="KW-0436">Ligase</keyword>
<keyword id="KW-0547">Nucleotide-binding</keyword>
<comment type="catalytic activity">
    <reaction evidence="1">
        <text>L-citrulline + L-aspartate + ATP = 2-(N(omega)-L-arginino)succinate + AMP + diphosphate + H(+)</text>
        <dbReference type="Rhea" id="RHEA:10932"/>
        <dbReference type="ChEBI" id="CHEBI:15378"/>
        <dbReference type="ChEBI" id="CHEBI:29991"/>
        <dbReference type="ChEBI" id="CHEBI:30616"/>
        <dbReference type="ChEBI" id="CHEBI:33019"/>
        <dbReference type="ChEBI" id="CHEBI:57472"/>
        <dbReference type="ChEBI" id="CHEBI:57743"/>
        <dbReference type="ChEBI" id="CHEBI:456215"/>
        <dbReference type="EC" id="6.3.4.5"/>
    </reaction>
</comment>
<comment type="pathway">
    <text evidence="1">Amino-acid biosynthesis; L-arginine biosynthesis; L-arginine from L-ornithine and carbamoyl phosphate: step 2/3.</text>
</comment>
<comment type="subunit">
    <text evidence="1">Homotetramer.</text>
</comment>
<comment type="subcellular location">
    <subcellularLocation>
        <location evidence="1">Cytoplasm</location>
    </subcellularLocation>
</comment>
<comment type="similarity">
    <text evidence="1">Belongs to the argininosuccinate synthase family. Type 1 subfamily.</text>
</comment>